<feature type="initiator methionine" description="Removed" evidence="1">
    <location>
        <position position="1"/>
    </location>
</feature>
<feature type="chain" id="PRO_0000055008" description="Putative ATP-dependent RNA helicase Pl10">
    <location>
        <begin position="2"/>
        <end position="660"/>
    </location>
</feature>
<feature type="domain" description="Helicase ATP-binding" evidence="4">
    <location>
        <begin position="210"/>
        <end position="402"/>
    </location>
</feature>
<feature type="domain" description="Helicase C-terminal" evidence="5">
    <location>
        <begin position="413"/>
        <end position="574"/>
    </location>
</feature>
<feature type="region of interest" description="Disordered" evidence="6">
    <location>
        <begin position="1"/>
        <end position="117"/>
    </location>
</feature>
<feature type="region of interest" description="Disordered" evidence="6">
    <location>
        <begin position="598"/>
        <end position="632"/>
    </location>
</feature>
<feature type="short sequence motif" description="Q motif">
    <location>
        <begin position="179"/>
        <end position="207"/>
    </location>
</feature>
<feature type="short sequence motif" description="DEAD box">
    <location>
        <begin position="346"/>
        <end position="349"/>
    </location>
</feature>
<feature type="compositionally biased region" description="Acidic residues" evidence="6">
    <location>
        <begin position="1"/>
        <end position="11"/>
    </location>
</feature>
<feature type="compositionally biased region" description="Low complexity" evidence="6">
    <location>
        <begin position="12"/>
        <end position="21"/>
    </location>
</feature>
<feature type="compositionally biased region" description="Polar residues" evidence="6">
    <location>
        <begin position="24"/>
        <end position="34"/>
    </location>
</feature>
<feature type="compositionally biased region" description="Basic and acidic residues" evidence="6">
    <location>
        <begin position="44"/>
        <end position="66"/>
    </location>
</feature>
<feature type="compositionally biased region" description="Basic and acidic residues" evidence="6">
    <location>
        <begin position="93"/>
        <end position="103"/>
    </location>
</feature>
<feature type="compositionally biased region" description="Low complexity" evidence="6">
    <location>
        <begin position="602"/>
        <end position="620"/>
    </location>
</feature>
<feature type="compositionally biased region" description="Gly residues" evidence="6">
    <location>
        <begin position="621"/>
        <end position="632"/>
    </location>
</feature>
<feature type="binding site" evidence="4">
    <location>
        <begin position="199"/>
        <end position="206"/>
    </location>
    <ligand>
        <name>ATP</name>
        <dbReference type="ChEBI" id="CHEBI:30616"/>
    </ligand>
</feature>
<feature type="binding site" evidence="4">
    <location>
        <begin position="223"/>
        <end position="230"/>
    </location>
    <ligand>
        <name>ATP</name>
        <dbReference type="ChEBI" id="CHEBI:30616"/>
    </ligand>
</feature>
<feature type="modified residue" description="N-acetylserine" evidence="1">
    <location>
        <position position="2"/>
    </location>
</feature>
<feature type="modified residue" description="N6-acetyllysine" evidence="3">
    <location>
        <position position="55"/>
    </location>
</feature>
<feature type="modified residue" description="Phosphoserine" evidence="1">
    <location>
        <position position="80"/>
    </location>
</feature>
<feature type="modified residue" description="Phosphoserine" evidence="1">
    <location>
        <position position="84"/>
    </location>
</feature>
<feature type="modified residue" description="Phosphoserine" evidence="1">
    <location>
        <position position="89"/>
    </location>
</feature>
<feature type="modified residue" description="Omega-N-methylarginine" evidence="3">
    <location>
        <position position="100"/>
    </location>
</feature>
<feature type="modified residue" description="Phosphoserine" evidence="1">
    <location>
        <position position="101"/>
    </location>
</feature>
<feature type="modified residue" description="Phosphotyrosine" evidence="3">
    <location>
        <position position="103"/>
    </location>
</feature>
<feature type="modified residue" description="Omega-N-methylarginine" evidence="3">
    <location>
        <position position="109"/>
    </location>
</feature>
<feature type="modified residue" description="N6-acetyllysine" evidence="1">
    <location>
        <position position="117"/>
    </location>
</feature>
<feature type="modified residue" description="Phosphoserine" evidence="1">
    <location>
        <position position="182"/>
    </location>
</feature>
<feature type="modified residue" description="Phosphoserine" evidence="2">
    <location>
        <position position="455"/>
    </location>
</feature>
<feature type="modified residue" description="Omega-N-methylarginine" evidence="1">
    <location>
        <position position="590"/>
    </location>
</feature>
<feature type="modified residue" description="Phosphoserine" evidence="1">
    <location>
        <position position="592"/>
    </location>
</feature>
<feature type="modified residue" description="Phosphoserine" evidence="1">
    <location>
        <position position="603"/>
    </location>
</feature>
<feature type="modified residue" description="Phosphoserine" evidence="1">
    <location>
        <position position="610"/>
    </location>
</feature>
<feature type="modified residue" description="Omega-N-methylarginine" evidence="1">
    <location>
        <position position="615"/>
    </location>
</feature>
<feature type="modified residue" description="Omega-N-methylarginine" evidence="1">
    <location>
        <position position="630"/>
    </location>
</feature>
<feature type="cross-link" description="Glycyl lysine isopeptide (Lys-Gly) (interchain with G-Cter in SUMO2)" evidence="1">
    <location>
        <position position="214"/>
    </location>
</feature>
<organism>
    <name type="scientific">Mus musculus</name>
    <name type="common">Mouse</name>
    <dbReference type="NCBI Taxonomy" id="10090"/>
    <lineage>
        <taxon>Eukaryota</taxon>
        <taxon>Metazoa</taxon>
        <taxon>Chordata</taxon>
        <taxon>Craniata</taxon>
        <taxon>Vertebrata</taxon>
        <taxon>Euteleostomi</taxon>
        <taxon>Mammalia</taxon>
        <taxon>Eutheria</taxon>
        <taxon>Euarchontoglires</taxon>
        <taxon>Glires</taxon>
        <taxon>Rodentia</taxon>
        <taxon>Myomorpha</taxon>
        <taxon>Muroidea</taxon>
        <taxon>Muridae</taxon>
        <taxon>Murinae</taxon>
        <taxon>Mus</taxon>
        <taxon>Mus</taxon>
    </lineage>
</organism>
<protein>
    <recommendedName>
        <fullName>Putative ATP-dependent RNA helicase Pl10</fullName>
        <ecNumber>3.6.4.13</ecNumber>
    </recommendedName>
</protein>
<gene>
    <name type="primary">D1Pas1</name>
    <name type="synonym">Pl10</name>
</gene>
<sequence>MSHVAEEDELGLDQQLAGLDLTSRDSQSGGSTASKGRYIPPHLRNREAAKAFYDKDGSRWSKDKDAYSSFGSRSDTRAKSSFFSDRGGSGSRGRFDERGRSDYESVGSRGGRSGFGKFERGGNSRWCDKADEDDWSKPLPPSERLEQELFSGGNTGINFEKYDDIPVEATGNNCPPHIESFSDVEMGEIIMGNIELTRYTRPTPVQKHAIPIIKEKRDLMACAQTGSGKTAAFLLPILSQIYTDGPGEALRAMKENGKYGRRKQYPISLVLAPTRELAVQIYEEARKFSYRSRVRPCVVYGGADIGQQIRDLERGCHLLVATPGRLVDMMERGKIGLDFCKYLVLDEADRMLDMGFEPQIRRIVEQDTMPPKGVRHTMMFSATFPKEIQMLARDFLDEYIFLAVGRVGSTSENITQKVVWVEEADKRSFLLDLLNATGKDSLILVFVETKKGADSLEDFLYHEGYACTSIHGDRSQRDREEALHQFRSGKSPILVATAVAARGLDISNVKHVINFDLPSDIEEYVHRIGRTGRVGNLGLATSFFNERNINITKDLLDLLVEAKQEVPSWLENMAFEHHYKGGSRGRSKSRFSGGFGARDYRQSSGASSSSFSSGRASNSRSGGGSHGSSRGFGGGSYGGFYNSDGYGGNYSSQGVDWWGN</sequence>
<name>DDX3L_MOUSE</name>
<keyword id="KW-0007">Acetylation</keyword>
<keyword id="KW-0067">ATP-binding</keyword>
<keyword id="KW-0217">Developmental protein</keyword>
<keyword id="KW-0221">Differentiation</keyword>
<keyword id="KW-0238">DNA-binding</keyword>
<keyword id="KW-0347">Helicase</keyword>
<keyword id="KW-0378">Hydrolase</keyword>
<keyword id="KW-1017">Isopeptide bond</keyword>
<keyword id="KW-0488">Methylation</keyword>
<keyword id="KW-0547">Nucleotide-binding</keyword>
<keyword id="KW-0597">Phosphoprotein</keyword>
<keyword id="KW-1185">Reference proteome</keyword>
<keyword id="KW-0677">Repeat</keyword>
<keyword id="KW-0694">RNA-binding</keyword>
<keyword id="KW-0744">Spermatogenesis</keyword>
<keyword id="KW-0832">Ubl conjugation</keyword>
<accession>P16381</accession>
<comment type="function">
    <text>Putative ATP-dependent RNA helicase. Possible role in a key step of the spermatogenic process.</text>
</comment>
<comment type="catalytic activity">
    <reaction>
        <text>ATP + H2O = ADP + phosphate + H(+)</text>
        <dbReference type="Rhea" id="RHEA:13065"/>
        <dbReference type="ChEBI" id="CHEBI:15377"/>
        <dbReference type="ChEBI" id="CHEBI:15378"/>
        <dbReference type="ChEBI" id="CHEBI:30616"/>
        <dbReference type="ChEBI" id="CHEBI:43474"/>
        <dbReference type="ChEBI" id="CHEBI:456216"/>
        <dbReference type="EC" id="3.6.4.13"/>
    </reaction>
</comment>
<comment type="tissue specificity">
    <text>Testis.</text>
</comment>
<comment type="developmental stage">
    <text>High levels of PL10 during the meiotic and haploid stages of spermatogenesis.</text>
</comment>
<comment type="similarity">
    <text evidence="7">Belongs to the DEAD box helicase family. DDX3/DED1 subfamily.</text>
</comment>
<proteinExistence type="evidence at protein level"/>
<dbReference type="EC" id="3.6.4.13"/>
<dbReference type="EMBL" id="J04847">
    <property type="protein sequence ID" value="AAA39942.1"/>
    <property type="molecule type" value="mRNA"/>
</dbReference>
<dbReference type="EMBL" id="AK029542">
    <property type="protein sequence ID" value="BAC26505.1"/>
    <property type="molecule type" value="mRNA"/>
</dbReference>
<dbReference type="CCDS" id="CCDS15603.1"/>
<dbReference type="PIR" id="A32378">
    <property type="entry name" value="A32378"/>
</dbReference>
<dbReference type="RefSeq" id="NP_149068.1">
    <property type="nucleotide sequence ID" value="NM_033077.3"/>
</dbReference>
<dbReference type="SMR" id="P16381"/>
<dbReference type="BioGRID" id="226052">
    <property type="interactions" value="11"/>
</dbReference>
<dbReference type="FunCoup" id="P16381">
    <property type="interactions" value="356"/>
</dbReference>
<dbReference type="IntAct" id="P16381">
    <property type="interactions" value="3"/>
</dbReference>
<dbReference type="STRING" id="10090.ENSMUSP00000035261"/>
<dbReference type="GlyGen" id="P16381">
    <property type="glycosylation" value="1 site, 1 O-linked glycan (1 site)"/>
</dbReference>
<dbReference type="iPTMnet" id="P16381"/>
<dbReference type="PhosphoSitePlus" id="P16381"/>
<dbReference type="SwissPalm" id="P16381"/>
<dbReference type="jPOST" id="P16381"/>
<dbReference type="PaxDb" id="10090-ENSMUSP00000035261"/>
<dbReference type="ProteomicsDB" id="279326"/>
<dbReference type="Pumba" id="P16381"/>
<dbReference type="DNASU" id="110957"/>
<dbReference type="Ensembl" id="ENSMUST00000045108.2">
    <property type="protein sequence ID" value="ENSMUSP00000035261.2"/>
    <property type="gene ID" value="ENSMUSG00000039224.2"/>
</dbReference>
<dbReference type="GeneID" id="110957"/>
<dbReference type="KEGG" id="mmu:110957"/>
<dbReference type="UCSC" id="uc007dzs.1">
    <property type="organism name" value="mouse"/>
</dbReference>
<dbReference type="AGR" id="MGI:91842"/>
<dbReference type="CTD" id="110957"/>
<dbReference type="MGI" id="MGI:91842">
    <property type="gene designation" value="D1Pas1"/>
</dbReference>
<dbReference type="VEuPathDB" id="HostDB:ENSMUSG00000039224"/>
<dbReference type="eggNOG" id="KOG0335">
    <property type="taxonomic scope" value="Eukaryota"/>
</dbReference>
<dbReference type="GeneTree" id="ENSGT00940000154443"/>
<dbReference type="HOGENOM" id="CLU_003041_16_3_1"/>
<dbReference type="InParanoid" id="P16381"/>
<dbReference type="OMA" id="ISGNDRW"/>
<dbReference type="OrthoDB" id="196131at2759"/>
<dbReference type="PhylomeDB" id="P16381"/>
<dbReference type="TreeFam" id="TF300364"/>
<dbReference type="Reactome" id="R-MMU-6798695">
    <property type="pathway name" value="Neutrophil degranulation"/>
</dbReference>
<dbReference type="BioGRID-ORCS" id="110957">
    <property type="hits" value="6 hits in 80 CRISPR screens"/>
</dbReference>
<dbReference type="CD-CODE" id="DE1E139C">
    <property type="entry name" value="Chromatoid body"/>
</dbReference>
<dbReference type="PRO" id="PR:P16381"/>
<dbReference type="Proteomes" id="UP000000589">
    <property type="component" value="Chromosome 1"/>
</dbReference>
<dbReference type="RNAct" id="P16381">
    <property type="molecule type" value="protein"/>
</dbReference>
<dbReference type="Bgee" id="ENSMUSG00000039224">
    <property type="expression patterns" value="Expressed in seminiferous tubule of testis and 20 other cell types or tissues"/>
</dbReference>
<dbReference type="ExpressionAtlas" id="P16381">
    <property type="expression patterns" value="baseline and differential"/>
</dbReference>
<dbReference type="GO" id="GO:0005524">
    <property type="term" value="F:ATP binding"/>
    <property type="evidence" value="ECO:0007669"/>
    <property type="project" value="UniProtKB-KW"/>
</dbReference>
<dbReference type="GO" id="GO:0016887">
    <property type="term" value="F:ATP hydrolysis activity"/>
    <property type="evidence" value="ECO:0007669"/>
    <property type="project" value="RHEA"/>
</dbReference>
<dbReference type="GO" id="GO:0003677">
    <property type="term" value="F:DNA binding"/>
    <property type="evidence" value="ECO:0007669"/>
    <property type="project" value="UniProtKB-KW"/>
</dbReference>
<dbReference type="GO" id="GO:0003723">
    <property type="term" value="F:RNA binding"/>
    <property type="evidence" value="ECO:0007669"/>
    <property type="project" value="UniProtKB-KW"/>
</dbReference>
<dbReference type="GO" id="GO:0003724">
    <property type="term" value="F:RNA helicase activity"/>
    <property type="evidence" value="ECO:0007669"/>
    <property type="project" value="UniProtKB-EC"/>
</dbReference>
<dbReference type="GO" id="GO:0030154">
    <property type="term" value="P:cell differentiation"/>
    <property type="evidence" value="ECO:0007669"/>
    <property type="project" value="UniProtKB-KW"/>
</dbReference>
<dbReference type="GO" id="GO:0007283">
    <property type="term" value="P:spermatogenesis"/>
    <property type="evidence" value="ECO:0000315"/>
    <property type="project" value="MGI"/>
</dbReference>
<dbReference type="CDD" id="cd18051">
    <property type="entry name" value="DEADc_DDX3"/>
    <property type="match status" value="1"/>
</dbReference>
<dbReference type="CDD" id="cd18787">
    <property type="entry name" value="SF2_C_DEAD"/>
    <property type="match status" value="1"/>
</dbReference>
<dbReference type="FunFam" id="3.40.50.300:FF:000160">
    <property type="entry name" value="ATP-dependent RNA helicase DDX3X"/>
    <property type="match status" value="1"/>
</dbReference>
<dbReference type="FunFam" id="3.40.50.300:FF:000008">
    <property type="entry name" value="ATP-dependent RNA helicase RhlB"/>
    <property type="match status" value="1"/>
</dbReference>
<dbReference type="Gene3D" id="3.40.50.300">
    <property type="entry name" value="P-loop containing nucleotide triphosphate hydrolases"/>
    <property type="match status" value="2"/>
</dbReference>
<dbReference type="InterPro" id="IPR011545">
    <property type="entry name" value="DEAD/DEAH_box_helicase_dom"/>
</dbReference>
<dbReference type="InterPro" id="IPR014001">
    <property type="entry name" value="Helicase_ATP-bd"/>
</dbReference>
<dbReference type="InterPro" id="IPR001650">
    <property type="entry name" value="Helicase_C-like"/>
</dbReference>
<dbReference type="InterPro" id="IPR027417">
    <property type="entry name" value="P-loop_NTPase"/>
</dbReference>
<dbReference type="InterPro" id="IPR000629">
    <property type="entry name" value="RNA-helicase_DEAD-box_CS"/>
</dbReference>
<dbReference type="InterPro" id="IPR014014">
    <property type="entry name" value="RNA_helicase_DEAD_Q_motif"/>
</dbReference>
<dbReference type="PANTHER" id="PTHR47958">
    <property type="entry name" value="ATP-DEPENDENT RNA HELICASE DBP3"/>
    <property type="match status" value="1"/>
</dbReference>
<dbReference type="Pfam" id="PF00270">
    <property type="entry name" value="DEAD"/>
    <property type="match status" value="1"/>
</dbReference>
<dbReference type="Pfam" id="PF00271">
    <property type="entry name" value="Helicase_C"/>
    <property type="match status" value="1"/>
</dbReference>
<dbReference type="SMART" id="SM00487">
    <property type="entry name" value="DEXDc"/>
    <property type="match status" value="1"/>
</dbReference>
<dbReference type="SMART" id="SM00490">
    <property type="entry name" value="HELICc"/>
    <property type="match status" value="1"/>
</dbReference>
<dbReference type="SUPFAM" id="SSF52540">
    <property type="entry name" value="P-loop containing nucleoside triphosphate hydrolases"/>
    <property type="match status" value="1"/>
</dbReference>
<dbReference type="PROSITE" id="PS00039">
    <property type="entry name" value="DEAD_ATP_HELICASE"/>
    <property type="match status" value="1"/>
</dbReference>
<dbReference type="PROSITE" id="PS51192">
    <property type="entry name" value="HELICASE_ATP_BIND_1"/>
    <property type="match status" value="1"/>
</dbReference>
<dbReference type="PROSITE" id="PS51194">
    <property type="entry name" value="HELICASE_CTER"/>
    <property type="match status" value="1"/>
</dbReference>
<dbReference type="PROSITE" id="PS51195">
    <property type="entry name" value="Q_MOTIF"/>
    <property type="match status" value="1"/>
</dbReference>
<evidence type="ECO:0000250" key="1">
    <source>
        <dbReference type="UniProtKB" id="O00571"/>
    </source>
</evidence>
<evidence type="ECO:0000250" key="2">
    <source>
        <dbReference type="UniProtKB" id="Q62095"/>
    </source>
</evidence>
<evidence type="ECO:0000250" key="3">
    <source>
        <dbReference type="UniProtKB" id="Q62167"/>
    </source>
</evidence>
<evidence type="ECO:0000255" key="4">
    <source>
        <dbReference type="PROSITE-ProRule" id="PRU00541"/>
    </source>
</evidence>
<evidence type="ECO:0000255" key="5">
    <source>
        <dbReference type="PROSITE-ProRule" id="PRU00542"/>
    </source>
</evidence>
<evidence type="ECO:0000256" key="6">
    <source>
        <dbReference type="SAM" id="MobiDB-lite"/>
    </source>
</evidence>
<evidence type="ECO:0000305" key="7"/>
<reference key="1">
    <citation type="journal article" date="1989" name="Cell">
        <title>The protein encoded by a murine male germ cell-specific transcript is a putative ATP-dependent RNA helicase.</title>
        <authorList>
            <person name="Leroy P."/>
            <person name="Alzari P."/>
            <person name="Sassoon D."/>
            <person name="Wolgemuth D."/>
            <person name="Fellous M."/>
        </authorList>
    </citation>
    <scope>NUCLEOTIDE SEQUENCE [MRNA]</scope>
    <source>
        <tissue>Testis</tissue>
    </source>
</reference>
<reference key="2">
    <citation type="journal article" date="2005" name="Science">
        <title>The transcriptional landscape of the mammalian genome.</title>
        <authorList>
            <person name="Carninci P."/>
            <person name="Kasukawa T."/>
            <person name="Katayama S."/>
            <person name="Gough J."/>
            <person name="Frith M.C."/>
            <person name="Maeda N."/>
            <person name="Oyama R."/>
            <person name="Ravasi T."/>
            <person name="Lenhard B."/>
            <person name="Wells C."/>
            <person name="Kodzius R."/>
            <person name="Shimokawa K."/>
            <person name="Bajic V.B."/>
            <person name="Brenner S.E."/>
            <person name="Batalov S."/>
            <person name="Forrest A.R."/>
            <person name="Zavolan M."/>
            <person name="Davis M.J."/>
            <person name="Wilming L.G."/>
            <person name="Aidinis V."/>
            <person name="Allen J.E."/>
            <person name="Ambesi-Impiombato A."/>
            <person name="Apweiler R."/>
            <person name="Aturaliya R.N."/>
            <person name="Bailey T.L."/>
            <person name="Bansal M."/>
            <person name="Baxter L."/>
            <person name="Beisel K.W."/>
            <person name="Bersano T."/>
            <person name="Bono H."/>
            <person name="Chalk A.M."/>
            <person name="Chiu K.P."/>
            <person name="Choudhary V."/>
            <person name="Christoffels A."/>
            <person name="Clutterbuck D.R."/>
            <person name="Crowe M.L."/>
            <person name="Dalla E."/>
            <person name="Dalrymple B.P."/>
            <person name="de Bono B."/>
            <person name="Della Gatta G."/>
            <person name="di Bernardo D."/>
            <person name="Down T."/>
            <person name="Engstrom P."/>
            <person name="Fagiolini M."/>
            <person name="Faulkner G."/>
            <person name="Fletcher C.F."/>
            <person name="Fukushima T."/>
            <person name="Furuno M."/>
            <person name="Futaki S."/>
            <person name="Gariboldi M."/>
            <person name="Georgii-Hemming P."/>
            <person name="Gingeras T.R."/>
            <person name="Gojobori T."/>
            <person name="Green R.E."/>
            <person name="Gustincich S."/>
            <person name="Harbers M."/>
            <person name="Hayashi Y."/>
            <person name="Hensch T.K."/>
            <person name="Hirokawa N."/>
            <person name="Hill D."/>
            <person name="Huminiecki L."/>
            <person name="Iacono M."/>
            <person name="Ikeo K."/>
            <person name="Iwama A."/>
            <person name="Ishikawa T."/>
            <person name="Jakt M."/>
            <person name="Kanapin A."/>
            <person name="Katoh M."/>
            <person name="Kawasawa Y."/>
            <person name="Kelso J."/>
            <person name="Kitamura H."/>
            <person name="Kitano H."/>
            <person name="Kollias G."/>
            <person name="Krishnan S.P."/>
            <person name="Kruger A."/>
            <person name="Kummerfeld S.K."/>
            <person name="Kurochkin I.V."/>
            <person name="Lareau L.F."/>
            <person name="Lazarevic D."/>
            <person name="Lipovich L."/>
            <person name="Liu J."/>
            <person name="Liuni S."/>
            <person name="McWilliam S."/>
            <person name="Madan Babu M."/>
            <person name="Madera M."/>
            <person name="Marchionni L."/>
            <person name="Matsuda H."/>
            <person name="Matsuzawa S."/>
            <person name="Miki H."/>
            <person name="Mignone F."/>
            <person name="Miyake S."/>
            <person name="Morris K."/>
            <person name="Mottagui-Tabar S."/>
            <person name="Mulder N."/>
            <person name="Nakano N."/>
            <person name="Nakauchi H."/>
            <person name="Ng P."/>
            <person name="Nilsson R."/>
            <person name="Nishiguchi S."/>
            <person name="Nishikawa S."/>
            <person name="Nori F."/>
            <person name="Ohara O."/>
            <person name="Okazaki Y."/>
            <person name="Orlando V."/>
            <person name="Pang K.C."/>
            <person name="Pavan W.J."/>
            <person name="Pavesi G."/>
            <person name="Pesole G."/>
            <person name="Petrovsky N."/>
            <person name="Piazza S."/>
            <person name="Reed J."/>
            <person name="Reid J.F."/>
            <person name="Ring B.Z."/>
            <person name="Ringwald M."/>
            <person name="Rost B."/>
            <person name="Ruan Y."/>
            <person name="Salzberg S.L."/>
            <person name="Sandelin A."/>
            <person name="Schneider C."/>
            <person name="Schoenbach C."/>
            <person name="Sekiguchi K."/>
            <person name="Semple C.A."/>
            <person name="Seno S."/>
            <person name="Sessa L."/>
            <person name="Sheng Y."/>
            <person name="Shibata Y."/>
            <person name="Shimada H."/>
            <person name="Shimada K."/>
            <person name="Silva D."/>
            <person name="Sinclair B."/>
            <person name="Sperling S."/>
            <person name="Stupka E."/>
            <person name="Sugiura K."/>
            <person name="Sultana R."/>
            <person name="Takenaka Y."/>
            <person name="Taki K."/>
            <person name="Tammoja K."/>
            <person name="Tan S.L."/>
            <person name="Tang S."/>
            <person name="Taylor M.S."/>
            <person name="Tegner J."/>
            <person name="Teichmann S.A."/>
            <person name="Ueda H.R."/>
            <person name="van Nimwegen E."/>
            <person name="Verardo R."/>
            <person name="Wei C.L."/>
            <person name="Yagi K."/>
            <person name="Yamanishi H."/>
            <person name="Zabarovsky E."/>
            <person name="Zhu S."/>
            <person name="Zimmer A."/>
            <person name="Hide W."/>
            <person name="Bult C."/>
            <person name="Grimmond S.M."/>
            <person name="Teasdale R.D."/>
            <person name="Liu E.T."/>
            <person name="Brusic V."/>
            <person name="Quackenbush J."/>
            <person name="Wahlestedt C."/>
            <person name="Mattick J.S."/>
            <person name="Hume D.A."/>
            <person name="Kai C."/>
            <person name="Sasaki D."/>
            <person name="Tomaru Y."/>
            <person name="Fukuda S."/>
            <person name="Kanamori-Katayama M."/>
            <person name="Suzuki M."/>
            <person name="Aoki J."/>
            <person name="Arakawa T."/>
            <person name="Iida J."/>
            <person name="Imamura K."/>
            <person name="Itoh M."/>
            <person name="Kato T."/>
            <person name="Kawaji H."/>
            <person name="Kawagashira N."/>
            <person name="Kawashima T."/>
            <person name="Kojima M."/>
            <person name="Kondo S."/>
            <person name="Konno H."/>
            <person name="Nakano K."/>
            <person name="Ninomiya N."/>
            <person name="Nishio T."/>
            <person name="Okada M."/>
            <person name="Plessy C."/>
            <person name="Shibata K."/>
            <person name="Shiraki T."/>
            <person name="Suzuki S."/>
            <person name="Tagami M."/>
            <person name="Waki K."/>
            <person name="Watahiki A."/>
            <person name="Okamura-Oho Y."/>
            <person name="Suzuki H."/>
            <person name="Kawai J."/>
            <person name="Hayashizaki Y."/>
        </authorList>
    </citation>
    <scope>NUCLEOTIDE SEQUENCE [LARGE SCALE MRNA]</scope>
    <source>
        <strain>C57BL/6J</strain>
        <tissue>Testis</tissue>
    </source>
</reference>
<reference key="3">
    <citation type="journal article" date="2010" name="Cell">
        <title>A tissue-specific atlas of mouse protein phosphorylation and expression.</title>
        <authorList>
            <person name="Huttlin E.L."/>
            <person name="Jedrychowski M.P."/>
            <person name="Elias J.E."/>
            <person name="Goswami T."/>
            <person name="Rad R."/>
            <person name="Beausoleil S.A."/>
            <person name="Villen J."/>
            <person name="Haas W."/>
            <person name="Sowa M.E."/>
            <person name="Gygi S.P."/>
        </authorList>
    </citation>
    <scope>IDENTIFICATION BY MASS SPECTROMETRY [LARGE SCALE ANALYSIS]</scope>
    <source>
        <tissue>Testis</tissue>
    </source>
</reference>